<accession>Q8FR21</accession>
<keyword id="KW-1185">Reference proteome</keyword>
<keyword id="KW-0687">Ribonucleoprotein</keyword>
<keyword id="KW-0689">Ribosomal protein</keyword>
<evidence type="ECO:0000255" key="1">
    <source>
        <dbReference type="HAMAP-Rule" id="MF_00502"/>
    </source>
</evidence>
<evidence type="ECO:0000305" key="2"/>
<feature type="chain" id="PRO_0000173220" description="Large ribosomal subunit protein bL31B">
    <location>
        <begin position="1"/>
        <end position="88"/>
    </location>
</feature>
<sequence length="88" mass="10075">MKNEIHPDYHPVVFQDAGTGFQFLTRSTATSDRTIAWEDGNEYPLIVVDVTSESHPFWTGAQRVMDTAGRVEKFERRFGGMARRKKKA</sequence>
<reference key="1">
    <citation type="journal article" date="2003" name="Genome Res.">
        <title>Comparative complete genome sequence analysis of the amino acid replacements responsible for the thermostability of Corynebacterium efficiens.</title>
        <authorList>
            <person name="Nishio Y."/>
            <person name="Nakamura Y."/>
            <person name="Kawarabayasi Y."/>
            <person name="Usuda Y."/>
            <person name="Kimura E."/>
            <person name="Sugimoto S."/>
            <person name="Matsui K."/>
            <person name="Yamagishi A."/>
            <person name="Kikuchi H."/>
            <person name="Ikeo K."/>
            <person name="Gojobori T."/>
        </authorList>
    </citation>
    <scope>NUCLEOTIDE SEQUENCE [LARGE SCALE GENOMIC DNA]</scope>
    <source>
        <strain>DSM 44549 / YS-314 / AJ 12310 / JCM 11189 / NBRC 100395</strain>
    </source>
</reference>
<comment type="subunit">
    <text evidence="1">Part of the 50S ribosomal subunit.</text>
</comment>
<comment type="similarity">
    <text evidence="1">Belongs to the bacterial ribosomal protein bL31 family. Type B subfamily.</text>
</comment>
<protein>
    <recommendedName>
        <fullName evidence="1">Large ribosomal subunit protein bL31B</fullName>
    </recommendedName>
    <alternativeName>
        <fullName evidence="2">50S ribosomal protein L31 type B</fullName>
    </alternativeName>
</protein>
<dbReference type="EMBL" id="BA000035">
    <property type="protein sequence ID" value="BAC17756.1"/>
    <property type="molecule type" value="Genomic_DNA"/>
</dbReference>
<dbReference type="RefSeq" id="WP_006770089.1">
    <property type="nucleotide sequence ID" value="NC_004369.1"/>
</dbReference>
<dbReference type="SMR" id="Q8FR21"/>
<dbReference type="STRING" id="196164.gene:10741352"/>
<dbReference type="KEGG" id="cef:CE0946"/>
<dbReference type="eggNOG" id="COG0254">
    <property type="taxonomic scope" value="Bacteria"/>
</dbReference>
<dbReference type="HOGENOM" id="CLU_114306_2_1_11"/>
<dbReference type="OrthoDB" id="9803251at2"/>
<dbReference type="Proteomes" id="UP000001409">
    <property type="component" value="Chromosome"/>
</dbReference>
<dbReference type="GO" id="GO:1990904">
    <property type="term" value="C:ribonucleoprotein complex"/>
    <property type="evidence" value="ECO:0007669"/>
    <property type="project" value="UniProtKB-KW"/>
</dbReference>
<dbReference type="GO" id="GO:0005840">
    <property type="term" value="C:ribosome"/>
    <property type="evidence" value="ECO:0007669"/>
    <property type="project" value="UniProtKB-KW"/>
</dbReference>
<dbReference type="GO" id="GO:0003735">
    <property type="term" value="F:structural constituent of ribosome"/>
    <property type="evidence" value="ECO:0007669"/>
    <property type="project" value="InterPro"/>
</dbReference>
<dbReference type="GO" id="GO:0006412">
    <property type="term" value="P:translation"/>
    <property type="evidence" value="ECO:0007669"/>
    <property type="project" value="UniProtKB-UniRule"/>
</dbReference>
<dbReference type="Gene3D" id="4.10.830.30">
    <property type="entry name" value="Ribosomal protein L31"/>
    <property type="match status" value="1"/>
</dbReference>
<dbReference type="HAMAP" id="MF_00502">
    <property type="entry name" value="Ribosomal_bL31_2"/>
    <property type="match status" value="1"/>
</dbReference>
<dbReference type="InterPro" id="IPR034704">
    <property type="entry name" value="Ribosomal_bL28/bL31-like_sf"/>
</dbReference>
<dbReference type="InterPro" id="IPR002150">
    <property type="entry name" value="Ribosomal_bL31"/>
</dbReference>
<dbReference type="InterPro" id="IPR027493">
    <property type="entry name" value="Ribosomal_bL31_B"/>
</dbReference>
<dbReference type="InterPro" id="IPR042105">
    <property type="entry name" value="Ribosomal_bL31_sf"/>
</dbReference>
<dbReference type="NCBIfam" id="TIGR00105">
    <property type="entry name" value="L31"/>
    <property type="match status" value="1"/>
</dbReference>
<dbReference type="NCBIfam" id="NF002462">
    <property type="entry name" value="PRK01678.1"/>
    <property type="match status" value="1"/>
</dbReference>
<dbReference type="PANTHER" id="PTHR33280">
    <property type="entry name" value="50S RIBOSOMAL PROTEIN L31, CHLOROPLASTIC"/>
    <property type="match status" value="1"/>
</dbReference>
<dbReference type="PANTHER" id="PTHR33280:SF1">
    <property type="entry name" value="LARGE RIBOSOMAL SUBUNIT PROTEIN BL31C"/>
    <property type="match status" value="1"/>
</dbReference>
<dbReference type="Pfam" id="PF01197">
    <property type="entry name" value="Ribosomal_L31"/>
    <property type="match status" value="1"/>
</dbReference>
<dbReference type="PRINTS" id="PR01249">
    <property type="entry name" value="RIBOSOMALL31"/>
</dbReference>
<dbReference type="SUPFAM" id="SSF143800">
    <property type="entry name" value="L28p-like"/>
    <property type="match status" value="1"/>
</dbReference>
<dbReference type="PROSITE" id="PS01143">
    <property type="entry name" value="RIBOSOMAL_L31"/>
    <property type="match status" value="1"/>
</dbReference>
<gene>
    <name evidence="1" type="primary">rpmE2</name>
    <name type="ordered locus">CE0946</name>
</gene>
<name>RL31B_COREF</name>
<organism>
    <name type="scientific">Corynebacterium efficiens (strain DSM 44549 / YS-314 / AJ 12310 / JCM 11189 / NBRC 100395)</name>
    <dbReference type="NCBI Taxonomy" id="196164"/>
    <lineage>
        <taxon>Bacteria</taxon>
        <taxon>Bacillati</taxon>
        <taxon>Actinomycetota</taxon>
        <taxon>Actinomycetes</taxon>
        <taxon>Mycobacteriales</taxon>
        <taxon>Corynebacteriaceae</taxon>
        <taxon>Corynebacterium</taxon>
    </lineage>
</organism>
<proteinExistence type="inferred from homology"/>